<comment type="function">
    <text evidence="1">Transcriptional activator that specifically binds 5'-GATA-3' or 5'-GAT-3' motifs within gene promoters. May be involved in the regulation of some light-responsive genes (By similarity).</text>
</comment>
<comment type="subcellular location">
    <subcellularLocation>
        <location evidence="5">Nucleus</location>
    </subcellularLocation>
</comment>
<comment type="similarity">
    <text evidence="5">Belongs to the type IV zinc-finger family. Class A subfamily.</text>
</comment>
<accession>O82632</accession>
<protein>
    <recommendedName>
        <fullName>GATA transcription factor 9</fullName>
    </recommendedName>
</protein>
<dbReference type="EMBL" id="AL031804">
    <property type="protein sequence ID" value="CAA21198.1"/>
    <property type="molecule type" value="Genomic_DNA"/>
</dbReference>
<dbReference type="EMBL" id="AL161582">
    <property type="protein sequence ID" value="CAB80006.1"/>
    <property type="molecule type" value="Genomic_DNA"/>
</dbReference>
<dbReference type="EMBL" id="CP002687">
    <property type="protein sequence ID" value="AEE86139.1"/>
    <property type="molecule type" value="Genomic_DNA"/>
</dbReference>
<dbReference type="EMBL" id="AK117169">
    <property type="protein sequence ID" value="BAC41847.1"/>
    <property type="molecule type" value="mRNA"/>
</dbReference>
<dbReference type="EMBL" id="BT008342">
    <property type="protein sequence ID" value="AAP37701.1"/>
    <property type="molecule type" value="mRNA"/>
</dbReference>
<dbReference type="PIR" id="T05297">
    <property type="entry name" value="T05297"/>
</dbReference>
<dbReference type="RefSeq" id="NP_195015.1">
    <property type="nucleotide sequence ID" value="NM_119442.3"/>
</dbReference>
<dbReference type="BioGRID" id="14710">
    <property type="interactions" value="3"/>
</dbReference>
<dbReference type="IntAct" id="O82632">
    <property type="interactions" value="3"/>
</dbReference>
<dbReference type="STRING" id="3702.O82632"/>
<dbReference type="PaxDb" id="3702-AT4G32890.1"/>
<dbReference type="EnsemblPlants" id="AT4G32890.1">
    <property type="protein sequence ID" value="AT4G32890.1"/>
    <property type="gene ID" value="AT4G32890"/>
</dbReference>
<dbReference type="GeneID" id="829425"/>
<dbReference type="Gramene" id="AT4G32890.1">
    <property type="protein sequence ID" value="AT4G32890.1"/>
    <property type="gene ID" value="AT4G32890"/>
</dbReference>
<dbReference type="KEGG" id="ath:AT4G32890"/>
<dbReference type="Araport" id="AT4G32890"/>
<dbReference type="TAIR" id="AT4G32890">
    <property type="gene designation" value="GATA9"/>
</dbReference>
<dbReference type="eggNOG" id="KOG1601">
    <property type="taxonomic scope" value="Eukaryota"/>
</dbReference>
<dbReference type="HOGENOM" id="CLU_045755_0_0_1"/>
<dbReference type="InParanoid" id="O82632"/>
<dbReference type="OMA" id="KMMKSAP"/>
<dbReference type="OrthoDB" id="2162994at2759"/>
<dbReference type="PhylomeDB" id="O82632"/>
<dbReference type="PRO" id="PR:O82632"/>
<dbReference type="Proteomes" id="UP000006548">
    <property type="component" value="Chromosome 4"/>
</dbReference>
<dbReference type="ExpressionAtlas" id="O82632">
    <property type="expression patterns" value="baseline and differential"/>
</dbReference>
<dbReference type="GO" id="GO:0005634">
    <property type="term" value="C:nucleus"/>
    <property type="evidence" value="ECO:0007669"/>
    <property type="project" value="UniProtKB-SubCell"/>
</dbReference>
<dbReference type="GO" id="GO:0003700">
    <property type="term" value="F:DNA-binding transcription factor activity"/>
    <property type="evidence" value="ECO:0000250"/>
    <property type="project" value="TAIR"/>
</dbReference>
<dbReference type="GO" id="GO:0000976">
    <property type="term" value="F:transcription cis-regulatory region binding"/>
    <property type="evidence" value="ECO:0000353"/>
    <property type="project" value="TAIR"/>
</dbReference>
<dbReference type="GO" id="GO:0008270">
    <property type="term" value="F:zinc ion binding"/>
    <property type="evidence" value="ECO:0007669"/>
    <property type="project" value="UniProtKB-KW"/>
</dbReference>
<dbReference type="GO" id="GO:0007623">
    <property type="term" value="P:circadian rhythm"/>
    <property type="evidence" value="ECO:0000270"/>
    <property type="project" value="TAIR"/>
</dbReference>
<dbReference type="GO" id="GO:0045893">
    <property type="term" value="P:positive regulation of DNA-templated transcription"/>
    <property type="evidence" value="ECO:0007669"/>
    <property type="project" value="InterPro"/>
</dbReference>
<dbReference type="GO" id="GO:0009416">
    <property type="term" value="P:response to light stimulus"/>
    <property type="evidence" value="ECO:0000270"/>
    <property type="project" value="TAIR"/>
</dbReference>
<dbReference type="CDD" id="cd00202">
    <property type="entry name" value="ZnF_GATA"/>
    <property type="match status" value="1"/>
</dbReference>
<dbReference type="FunFam" id="3.30.50.10:FF:000018">
    <property type="entry name" value="GATA transcription factor"/>
    <property type="match status" value="1"/>
</dbReference>
<dbReference type="Gene3D" id="3.30.50.10">
    <property type="entry name" value="Erythroid Transcription Factor GATA-1, subunit A"/>
    <property type="match status" value="1"/>
</dbReference>
<dbReference type="InterPro" id="IPR051140">
    <property type="entry name" value="GATA_TF"/>
</dbReference>
<dbReference type="InterPro" id="IPR016679">
    <property type="entry name" value="TF_GATA_pln"/>
</dbReference>
<dbReference type="InterPro" id="IPR000679">
    <property type="entry name" value="Znf_GATA"/>
</dbReference>
<dbReference type="InterPro" id="IPR013088">
    <property type="entry name" value="Znf_NHR/GATA"/>
</dbReference>
<dbReference type="PANTHER" id="PTHR45658">
    <property type="entry name" value="GATA TRANSCRIPTION FACTOR"/>
    <property type="match status" value="1"/>
</dbReference>
<dbReference type="PANTHER" id="PTHR45658:SF137">
    <property type="entry name" value="GATA TRANSCRIPTION FACTOR 9"/>
    <property type="match status" value="1"/>
</dbReference>
<dbReference type="Pfam" id="PF00320">
    <property type="entry name" value="GATA"/>
    <property type="match status" value="1"/>
</dbReference>
<dbReference type="PIRSF" id="PIRSF016992">
    <property type="entry name" value="TF_GATA_plant"/>
    <property type="match status" value="1"/>
</dbReference>
<dbReference type="SMART" id="SM00401">
    <property type="entry name" value="ZnF_GATA"/>
    <property type="match status" value="1"/>
</dbReference>
<dbReference type="SUPFAM" id="SSF57716">
    <property type="entry name" value="Glucocorticoid receptor-like (DNA-binding domain)"/>
    <property type="match status" value="1"/>
</dbReference>
<dbReference type="PROSITE" id="PS00344">
    <property type="entry name" value="GATA_ZN_FINGER_1"/>
    <property type="match status" value="1"/>
</dbReference>
<dbReference type="PROSITE" id="PS50114">
    <property type="entry name" value="GATA_ZN_FINGER_2"/>
    <property type="match status" value="1"/>
</dbReference>
<gene>
    <name type="primary">GATA9</name>
    <name type="ordered locus">At4g32890</name>
    <name type="ORF">F26P21.10</name>
</gene>
<reference key="1">
    <citation type="journal article" date="1999" name="Nature">
        <title>Sequence and analysis of chromosome 4 of the plant Arabidopsis thaliana.</title>
        <authorList>
            <person name="Mayer K.F.X."/>
            <person name="Schueller C."/>
            <person name="Wambutt R."/>
            <person name="Murphy G."/>
            <person name="Volckaert G."/>
            <person name="Pohl T."/>
            <person name="Duesterhoeft A."/>
            <person name="Stiekema W."/>
            <person name="Entian K.-D."/>
            <person name="Terryn N."/>
            <person name="Harris B."/>
            <person name="Ansorge W."/>
            <person name="Brandt P."/>
            <person name="Grivell L.A."/>
            <person name="Rieger M."/>
            <person name="Weichselgartner M."/>
            <person name="de Simone V."/>
            <person name="Obermaier B."/>
            <person name="Mache R."/>
            <person name="Mueller M."/>
            <person name="Kreis M."/>
            <person name="Delseny M."/>
            <person name="Puigdomenech P."/>
            <person name="Watson M."/>
            <person name="Schmidtheini T."/>
            <person name="Reichert B."/>
            <person name="Portetelle D."/>
            <person name="Perez-Alonso M."/>
            <person name="Boutry M."/>
            <person name="Bancroft I."/>
            <person name="Vos P."/>
            <person name="Hoheisel J."/>
            <person name="Zimmermann W."/>
            <person name="Wedler H."/>
            <person name="Ridley P."/>
            <person name="Langham S.-A."/>
            <person name="McCullagh B."/>
            <person name="Bilham L."/>
            <person name="Robben J."/>
            <person name="van der Schueren J."/>
            <person name="Grymonprez B."/>
            <person name="Chuang Y.-J."/>
            <person name="Vandenbussche F."/>
            <person name="Braeken M."/>
            <person name="Weltjens I."/>
            <person name="Voet M."/>
            <person name="Bastiaens I."/>
            <person name="Aert R."/>
            <person name="Defoor E."/>
            <person name="Weitzenegger T."/>
            <person name="Bothe G."/>
            <person name="Ramsperger U."/>
            <person name="Hilbert H."/>
            <person name="Braun M."/>
            <person name="Holzer E."/>
            <person name="Brandt A."/>
            <person name="Peters S."/>
            <person name="van Staveren M."/>
            <person name="Dirkse W."/>
            <person name="Mooijman P."/>
            <person name="Klein Lankhorst R."/>
            <person name="Rose M."/>
            <person name="Hauf J."/>
            <person name="Koetter P."/>
            <person name="Berneiser S."/>
            <person name="Hempel S."/>
            <person name="Feldpausch M."/>
            <person name="Lamberth S."/>
            <person name="Van den Daele H."/>
            <person name="De Keyser A."/>
            <person name="Buysshaert C."/>
            <person name="Gielen J."/>
            <person name="Villarroel R."/>
            <person name="De Clercq R."/>
            <person name="van Montagu M."/>
            <person name="Rogers J."/>
            <person name="Cronin A."/>
            <person name="Quail M.A."/>
            <person name="Bray-Allen S."/>
            <person name="Clark L."/>
            <person name="Doggett J."/>
            <person name="Hall S."/>
            <person name="Kay M."/>
            <person name="Lennard N."/>
            <person name="McLay K."/>
            <person name="Mayes R."/>
            <person name="Pettett A."/>
            <person name="Rajandream M.A."/>
            <person name="Lyne M."/>
            <person name="Benes V."/>
            <person name="Rechmann S."/>
            <person name="Borkova D."/>
            <person name="Bloecker H."/>
            <person name="Scharfe M."/>
            <person name="Grimm M."/>
            <person name="Loehnert T.-H."/>
            <person name="Dose S."/>
            <person name="de Haan M."/>
            <person name="Maarse A.C."/>
            <person name="Schaefer M."/>
            <person name="Mueller-Auer S."/>
            <person name="Gabel C."/>
            <person name="Fuchs M."/>
            <person name="Fartmann B."/>
            <person name="Granderath K."/>
            <person name="Dauner D."/>
            <person name="Herzl A."/>
            <person name="Neumann S."/>
            <person name="Argiriou A."/>
            <person name="Vitale D."/>
            <person name="Liguori R."/>
            <person name="Piravandi E."/>
            <person name="Massenet O."/>
            <person name="Quigley F."/>
            <person name="Clabauld G."/>
            <person name="Muendlein A."/>
            <person name="Felber R."/>
            <person name="Schnabl S."/>
            <person name="Hiller R."/>
            <person name="Schmidt W."/>
            <person name="Lecharny A."/>
            <person name="Aubourg S."/>
            <person name="Chefdor F."/>
            <person name="Cooke R."/>
            <person name="Berger C."/>
            <person name="Monfort A."/>
            <person name="Casacuberta E."/>
            <person name="Gibbons T."/>
            <person name="Weber N."/>
            <person name="Vandenbol M."/>
            <person name="Bargues M."/>
            <person name="Terol J."/>
            <person name="Torres A."/>
            <person name="Perez-Perez A."/>
            <person name="Purnelle B."/>
            <person name="Bent E."/>
            <person name="Johnson S."/>
            <person name="Tacon D."/>
            <person name="Jesse T."/>
            <person name="Heijnen L."/>
            <person name="Schwarz S."/>
            <person name="Scholler P."/>
            <person name="Heber S."/>
            <person name="Francs P."/>
            <person name="Bielke C."/>
            <person name="Frishman D."/>
            <person name="Haase D."/>
            <person name="Lemcke K."/>
            <person name="Mewes H.-W."/>
            <person name="Stocker S."/>
            <person name="Zaccaria P."/>
            <person name="Bevan M."/>
            <person name="Wilson R.K."/>
            <person name="de la Bastide M."/>
            <person name="Habermann K."/>
            <person name="Parnell L."/>
            <person name="Dedhia N."/>
            <person name="Gnoj L."/>
            <person name="Schutz K."/>
            <person name="Huang E."/>
            <person name="Spiegel L."/>
            <person name="Sekhon M."/>
            <person name="Murray J."/>
            <person name="Sheet P."/>
            <person name="Cordes M."/>
            <person name="Abu-Threideh J."/>
            <person name="Stoneking T."/>
            <person name="Kalicki J."/>
            <person name="Graves T."/>
            <person name="Harmon G."/>
            <person name="Edwards J."/>
            <person name="Latreille P."/>
            <person name="Courtney L."/>
            <person name="Cloud J."/>
            <person name="Abbott A."/>
            <person name="Scott K."/>
            <person name="Johnson D."/>
            <person name="Minx P."/>
            <person name="Bentley D."/>
            <person name="Fulton B."/>
            <person name="Miller N."/>
            <person name="Greco T."/>
            <person name="Kemp K."/>
            <person name="Kramer J."/>
            <person name="Fulton L."/>
            <person name="Mardis E."/>
            <person name="Dante M."/>
            <person name="Pepin K."/>
            <person name="Hillier L.W."/>
            <person name="Nelson J."/>
            <person name="Spieth J."/>
            <person name="Ryan E."/>
            <person name="Andrews S."/>
            <person name="Geisel C."/>
            <person name="Layman D."/>
            <person name="Du H."/>
            <person name="Ali J."/>
            <person name="Berghoff A."/>
            <person name="Jones K."/>
            <person name="Drone K."/>
            <person name="Cotton M."/>
            <person name="Joshu C."/>
            <person name="Antonoiu B."/>
            <person name="Zidanic M."/>
            <person name="Strong C."/>
            <person name="Sun H."/>
            <person name="Lamar B."/>
            <person name="Yordan C."/>
            <person name="Ma P."/>
            <person name="Zhong J."/>
            <person name="Preston R."/>
            <person name="Vil D."/>
            <person name="Shekher M."/>
            <person name="Matero A."/>
            <person name="Shah R."/>
            <person name="Swaby I.K."/>
            <person name="O'Shaughnessy A."/>
            <person name="Rodriguez M."/>
            <person name="Hoffman J."/>
            <person name="Till S."/>
            <person name="Granat S."/>
            <person name="Shohdy N."/>
            <person name="Hasegawa A."/>
            <person name="Hameed A."/>
            <person name="Lodhi M."/>
            <person name="Johnson A."/>
            <person name="Chen E."/>
            <person name="Marra M.A."/>
            <person name="Martienssen R."/>
            <person name="McCombie W.R."/>
        </authorList>
    </citation>
    <scope>NUCLEOTIDE SEQUENCE [LARGE SCALE GENOMIC DNA]</scope>
    <source>
        <strain>cv. Columbia</strain>
    </source>
</reference>
<reference key="2">
    <citation type="journal article" date="2017" name="Plant J.">
        <title>Araport11: a complete reannotation of the Arabidopsis thaliana reference genome.</title>
        <authorList>
            <person name="Cheng C.Y."/>
            <person name="Krishnakumar V."/>
            <person name="Chan A.P."/>
            <person name="Thibaud-Nissen F."/>
            <person name="Schobel S."/>
            <person name="Town C.D."/>
        </authorList>
    </citation>
    <scope>GENOME REANNOTATION</scope>
    <source>
        <strain>cv. Columbia</strain>
    </source>
</reference>
<reference key="3">
    <citation type="journal article" date="2002" name="Science">
        <title>Functional annotation of a full-length Arabidopsis cDNA collection.</title>
        <authorList>
            <person name="Seki M."/>
            <person name="Narusaka M."/>
            <person name="Kamiya A."/>
            <person name="Ishida J."/>
            <person name="Satou M."/>
            <person name="Sakurai T."/>
            <person name="Nakajima M."/>
            <person name="Enju A."/>
            <person name="Akiyama K."/>
            <person name="Oono Y."/>
            <person name="Muramatsu M."/>
            <person name="Hayashizaki Y."/>
            <person name="Kawai J."/>
            <person name="Carninci P."/>
            <person name="Itoh M."/>
            <person name="Ishii Y."/>
            <person name="Arakawa T."/>
            <person name="Shibata K."/>
            <person name="Shinagawa A."/>
            <person name="Shinozaki K."/>
        </authorList>
    </citation>
    <scope>NUCLEOTIDE SEQUENCE [LARGE SCALE MRNA]</scope>
    <source>
        <strain>cv. Columbia</strain>
    </source>
</reference>
<reference key="4">
    <citation type="journal article" date="2003" name="Science">
        <title>Empirical analysis of transcriptional activity in the Arabidopsis genome.</title>
        <authorList>
            <person name="Yamada K."/>
            <person name="Lim J."/>
            <person name="Dale J.M."/>
            <person name="Chen H."/>
            <person name="Shinn P."/>
            <person name="Palm C.J."/>
            <person name="Southwick A.M."/>
            <person name="Wu H.C."/>
            <person name="Kim C.J."/>
            <person name="Nguyen M."/>
            <person name="Pham P.K."/>
            <person name="Cheuk R.F."/>
            <person name="Karlin-Newmann G."/>
            <person name="Liu S.X."/>
            <person name="Lam B."/>
            <person name="Sakano H."/>
            <person name="Wu T."/>
            <person name="Yu G."/>
            <person name="Miranda M."/>
            <person name="Quach H.L."/>
            <person name="Tripp M."/>
            <person name="Chang C.H."/>
            <person name="Lee J.M."/>
            <person name="Toriumi M.J."/>
            <person name="Chan M.M."/>
            <person name="Tang C.C."/>
            <person name="Onodera C.S."/>
            <person name="Deng J.M."/>
            <person name="Akiyama K."/>
            <person name="Ansari Y."/>
            <person name="Arakawa T."/>
            <person name="Banh J."/>
            <person name="Banno F."/>
            <person name="Bowser L."/>
            <person name="Brooks S.Y."/>
            <person name="Carninci P."/>
            <person name="Chao Q."/>
            <person name="Choy N."/>
            <person name="Enju A."/>
            <person name="Goldsmith A.D."/>
            <person name="Gurjal M."/>
            <person name="Hansen N.F."/>
            <person name="Hayashizaki Y."/>
            <person name="Johnson-Hopson C."/>
            <person name="Hsuan V.W."/>
            <person name="Iida K."/>
            <person name="Karnes M."/>
            <person name="Khan S."/>
            <person name="Koesema E."/>
            <person name="Ishida J."/>
            <person name="Jiang P.X."/>
            <person name="Jones T."/>
            <person name="Kawai J."/>
            <person name="Kamiya A."/>
            <person name="Meyers C."/>
            <person name="Nakajima M."/>
            <person name="Narusaka M."/>
            <person name="Seki M."/>
            <person name="Sakurai T."/>
            <person name="Satou M."/>
            <person name="Tamse R."/>
            <person name="Vaysberg M."/>
            <person name="Wallender E.K."/>
            <person name="Wong C."/>
            <person name="Yamamura Y."/>
            <person name="Yuan S."/>
            <person name="Shinozaki K."/>
            <person name="Davis R.W."/>
            <person name="Theologis A."/>
            <person name="Ecker J.R."/>
        </authorList>
    </citation>
    <scope>NUCLEOTIDE SEQUENCE [LARGE SCALE MRNA]</scope>
    <source>
        <strain>cv. Columbia</strain>
    </source>
</reference>
<reference key="5">
    <citation type="journal article" date="2004" name="Plant Physiol.">
        <title>The GATA family of transcription factors in Arabidopsis and rice.</title>
        <authorList>
            <person name="Reyes J.C."/>
            <person name="Muro-Pastor M.I."/>
            <person name="Florencio F.J."/>
        </authorList>
    </citation>
    <scope>GENE FAMILY ORGANIZATION</scope>
</reference>
<feature type="chain" id="PRO_0000083440" description="GATA transcription factor 9">
    <location>
        <begin position="1"/>
        <end position="308"/>
    </location>
</feature>
<feature type="zinc finger region" description="GATA-type" evidence="3">
    <location>
        <begin position="193"/>
        <end position="247"/>
    </location>
</feature>
<feature type="region of interest" description="Disordered" evidence="4">
    <location>
        <begin position="34"/>
        <end position="57"/>
    </location>
</feature>
<feature type="short sequence motif" description="Nuclear localization signal" evidence="2">
    <location>
        <begin position="142"/>
        <end position="149"/>
    </location>
</feature>
<feature type="compositionally biased region" description="Low complexity" evidence="4">
    <location>
        <begin position="39"/>
        <end position="57"/>
    </location>
</feature>
<organism>
    <name type="scientific">Arabidopsis thaliana</name>
    <name type="common">Mouse-ear cress</name>
    <dbReference type="NCBI Taxonomy" id="3702"/>
    <lineage>
        <taxon>Eukaryota</taxon>
        <taxon>Viridiplantae</taxon>
        <taxon>Streptophyta</taxon>
        <taxon>Embryophyta</taxon>
        <taxon>Tracheophyta</taxon>
        <taxon>Spermatophyta</taxon>
        <taxon>Magnoliopsida</taxon>
        <taxon>eudicotyledons</taxon>
        <taxon>Gunneridae</taxon>
        <taxon>Pentapetalae</taxon>
        <taxon>rosids</taxon>
        <taxon>malvids</taxon>
        <taxon>Brassicales</taxon>
        <taxon>Brassicaceae</taxon>
        <taxon>Camelineae</taxon>
        <taxon>Arabidopsis</taxon>
    </lineage>
</organism>
<sequence>MEKIAPELFLVAGNPDSFVVDDLLDFSNDDGEVDDGLNTLPDSSTLSTGTLTDSSNSSSLFTDGTGFSDLYIPNDDIAELEWLSNFVEESFAGEDQDKLHLFSGLKNPQTTGSTLTHLIKPEPELDHQFIDIDESNVAVPAKARSKRSRSAASTWASRLLSLADSDETNPKKKQRRVKEQDFAGDMDVDCGESGGGRRCLHCATEKTPQWRTGPMGPKTLCNACGVRYKSGRLVPEYRPASSPTFVMARHSNSHRKVMELRRQKEMRDEHLLSQLRCENLLMDIRSNGEDFLMHNNTNHVAPDFRHLI</sequence>
<name>GATA9_ARATH</name>
<proteinExistence type="evidence at transcript level"/>
<keyword id="KW-0010">Activator</keyword>
<keyword id="KW-0238">DNA-binding</keyword>
<keyword id="KW-0479">Metal-binding</keyword>
<keyword id="KW-0539">Nucleus</keyword>
<keyword id="KW-1185">Reference proteome</keyword>
<keyword id="KW-0804">Transcription</keyword>
<keyword id="KW-0805">Transcription regulation</keyword>
<keyword id="KW-0862">Zinc</keyword>
<keyword id="KW-0863">Zinc-finger</keyword>
<evidence type="ECO:0000250" key="1"/>
<evidence type="ECO:0000255" key="2"/>
<evidence type="ECO:0000255" key="3">
    <source>
        <dbReference type="PROSITE-ProRule" id="PRU00094"/>
    </source>
</evidence>
<evidence type="ECO:0000256" key="4">
    <source>
        <dbReference type="SAM" id="MobiDB-lite"/>
    </source>
</evidence>
<evidence type="ECO:0000305" key="5"/>